<keyword id="KW-0963">Cytoplasm</keyword>
<keyword id="KW-0350">Heme biosynthesis</keyword>
<keyword id="KW-0408">Iron</keyword>
<keyword id="KW-0456">Lyase</keyword>
<keyword id="KW-0479">Metal-binding</keyword>
<keyword id="KW-0627">Porphyrin biosynthesis</keyword>
<keyword id="KW-1185">Reference proteome</keyword>
<name>HEMH_ACTP2</name>
<comment type="function">
    <text evidence="1">Catalyzes the ferrous insertion into protoporphyrin IX.</text>
</comment>
<comment type="catalytic activity">
    <reaction evidence="1">
        <text>heme b + 2 H(+) = protoporphyrin IX + Fe(2+)</text>
        <dbReference type="Rhea" id="RHEA:22584"/>
        <dbReference type="ChEBI" id="CHEBI:15378"/>
        <dbReference type="ChEBI" id="CHEBI:29033"/>
        <dbReference type="ChEBI" id="CHEBI:57306"/>
        <dbReference type="ChEBI" id="CHEBI:60344"/>
        <dbReference type="EC" id="4.98.1.1"/>
    </reaction>
</comment>
<comment type="pathway">
    <text evidence="1">Porphyrin-containing compound metabolism; protoheme biosynthesis; protoheme from protoporphyrin-IX: step 1/1.</text>
</comment>
<comment type="subcellular location">
    <subcellularLocation>
        <location evidence="1">Cytoplasm</location>
    </subcellularLocation>
</comment>
<comment type="similarity">
    <text evidence="1">Belongs to the ferrochelatase family.</text>
</comment>
<organism>
    <name type="scientific">Actinobacillus pleuropneumoniae serotype 5b (strain L20)</name>
    <dbReference type="NCBI Taxonomy" id="416269"/>
    <lineage>
        <taxon>Bacteria</taxon>
        <taxon>Pseudomonadati</taxon>
        <taxon>Pseudomonadota</taxon>
        <taxon>Gammaproteobacteria</taxon>
        <taxon>Pasteurellales</taxon>
        <taxon>Pasteurellaceae</taxon>
        <taxon>Actinobacillus</taxon>
    </lineage>
</organism>
<proteinExistence type="inferred from homology"/>
<dbReference type="EC" id="4.98.1.1" evidence="1"/>
<dbReference type="EMBL" id="CP000569">
    <property type="protein sequence ID" value="ABN75015.1"/>
    <property type="molecule type" value="Genomic_DNA"/>
</dbReference>
<dbReference type="RefSeq" id="WP_005599694.1">
    <property type="nucleotide sequence ID" value="NC_009053.1"/>
</dbReference>
<dbReference type="SMR" id="A3N3M9"/>
<dbReference type="STRING" id="416269.APL_1937"/>
<dbReference type="EnsemblBacteria" id="ABN75015">
    <property type="protein sequence ID" value="ABN75015"/>
    <property type="gene ID" value="APL_1937"/>
</dbReference>
<dbReference type="GeneID" id="48600241"/>
<dbReference type="KEGG" id="apl:APL_1937"/>
<dbReference type="eggNOG" id="COG0276">
    <property type="taxonomic scope" value="Bacteria"/>
</dbReference>
<dbReference type="HOGENOM" id="CLU_018884_0_0_6"/>
<dbReference type="UniPathway" id="UPA00252">
    <property type="reaction ID" value="UER00325"/>
</dbReference>
<dbReference type="Proteomes" id="UP000001432">
    <property type="component" value="Chromosome"/>
</dbReference>
<dbReference type="GO" id="GO:0005737">
    <property type="term" value="C:cytoplasm"/>
    <property type="evidence" value="ECO:0007669"/>
    <property type="project" value="UniProtKB-SubCell"/>
</dbReference>
<dbReference type="GO" id="GO:0004325">
    <property type="term" value="F:ferrochelatase activity"/>
    <property type="evidence" value="ECO:0007669"/>
    <property type="project" value="UniProtKB-UniRule"/>
</dbReference>
<dbReference type="GO" id="GO:0046872">
    <property type="term" value="F:metal ion binding"/>
    <property type="evidence" value="ECO:0007669"/>
    <property type="project" value="UniProtKB-KW"/>
</dbReference>
<dbReference type="GO" id="GO:0006783">
    <property type="term" value="P:heme biosynthetic process"/>
    <property type="evidence" value="ECO:0007669"/>
    <property type="project" value="UniProtKB-UniRule"/>
</dbReference>
<dbReference type="CDD" id="cd00419">
    <property type="entry name" value="Ferrochelatase_C"/>
    <property type="match status" value="1"/>
</dbReference>
<dbReference type="CDD" id="cd03411">
    <property type="entry name" value="Ferrochelatase_N"/>
    <property type="match status" value="1"/>
</dbReference>
<dbReference type="FunFam" id="3.40.50.1400:FF:000002">
    <property type="entry name" value="Ferrochelatase"/>
    <property type="match status" value="1"/>
</dbReference>
<dbReference type="Gene3D" id="3.40.50.1400">
    <property type="match status" value="2"/>
</dbReference>
<dbReference type="HAMAP" id="MF_00323">
    <property type="entry name" value="Ferrochelatase"/>
    <property type="match status" value="1"/>
</dbReference>
<dbReference type="InterPro" id="IPR001015">
    <property type="entry name" value="Ferrochelatase"/>
</dbReference>
<dbReference type="InterPro" id="IPR019772">
    <property type="entry name" value="Ferrochelatase_AS"/>
</dbReference>
<dbReference type="InterPro" id="IPR033644">
    <property type="entry name" value="Ferrochelatase_C"/>
</dbReference>
<dbReference type="InterPro" id="IPR033659">
    <property type="entry name" value="Ferrochelatase_N"/>
</dbReference>
<dbReference type="NCBIfam" id="TIGR00109">
    <property type="entry name" value="hemH"/>
    <property type="match status" value="1"/>
</dbReference>
<dbReference type="PANTHER" id="PTHR11108">
    <property type="entry name" value="FERROCHELATASE"/>
    <property type="match status" value="1"/>
</dbReference>
<dbReference type="PANTHER" id="PTHR11108:SF1">
    <property type="entry name" value="FERROCHELATASE, MITOCHONDRIAL"/>
    <property type="match status" value="1"/>
</dbReference>
<dbReference type="Pfam" id="PF00762">
    <property type="entry name" value="Ferrochelatase"/>
    <property type="match status" value="1"/>
</dbReference>
<dbReference type="SUPFAM" id="SSF53800">
    <property type="entry name" value="Chelatase"/>
    <property type="match status" value="1"/>
</dbReference>
<dbReference type="PROSITE" id="PS00534">
    <property type="entry name" value="FERROCHELATASE"/>
    <property type="match status" value="1"/>
</dbReference>
<protein>
    <recommendedName>
        <fullName evidence="1">Ferrochelatase</fullName>
        <ecNumber evidence="1">4.98.1.1</ecNumber>
    </recommendedName>
    <alternativeName>
        <fullName evidence="1">Heme synthase</fullName>
    </alternativeName>
    <alternativeName>
        <fullName evidence="1">Protoheme ferro-lyase</fullName>
    </alternativeName>
</protein>
<reference key="1">
    <citation type="journal article" date="2008" name="J. Bacteriol.">
        <title>The complete genome sequence of Actinobacillus pleuropneumoniae L20 (serotype 5b).</title>
        <authorList>
            <person name="Foote S.J."/>
            <person name="Bosse J.T."/>
            <person name="Bouevitch A.B."/>
            <person name="Langford P.R."/>
            <person name="Young N.M."/>
            <person name="Nash J.H.E."/>
        </authorList>
    </citation>
    <scope>NUCLEOTIDE SEQUENCE [LARGE SCALE GENOMIC DNA]</scope>
    <source>
        <strain>L20</strain>
    </source>
</reference>
<evidence type="ECO:0000255" key="1">
    <source>
        <dbReference type="HAMAP-Rule" id="MF_00323"/>
    </source>
</evidence>
<accession>A3N3M9</accession>
<gene>
    <name evidence="1" type="primary">hemH</name>
    <name type="ordered locus">APL_1937</name>
</gene>
<feature type="chain" id="PRO_1000019270" description="Ferrochelatase">
    <location>
        <begin position="1"/>
        <end position="319"/>
    </location>
</feature>
<feature type="binding site" evidence="1">
    <location>
        <position position="193"/>
    </location>
    <ligand>
        <name>Fe cation</name>
        <dbReference type="ChEBI" id="CHEBI:24875"/>
    </ligand>
</feature>
<feature type="binding site" evidence="1">
    <location>
        <position position="274"/>
    </location>
    <ligand>
        <name>Fe cation</name>
        <dbReference type="ChEBI" id="CHEBI:24875"/>
    </ligand>
</feature>
<sequence>MNTNKIGVLLANLGTPDEPTTPAVKRYLKQFLSDPRVIDLPKFKWQFILNYMILPKRSPKVAKLYREIWTEQGSPLLAISRQQQQALQDYFNRQNQNVLVELGMSYGNPSIESATDRLIKAGVSKIIVLPLYPQYSSTTTASVLDAFARGLTQQRNIVPFEFIHSYHNDPLYIQALANTIRLADDEKLLFSFHGIPKRYQTEGDFYPEHCQKTAQLVADKLSLSNEQWLVTYQSRFGDEEWLQPYTDETLEKLPSQGVKKIAVICAGFSADCLETLEEIAEENKENFLNAGGQSYRYIPALNANTDHINALAKLIEAKI</sequence>